<keyword id="KW-0235">DNA replication</keyword>
<keyword id="KW-0238">DNA-binding</keyword>
<keyword id="KW-0239">DNA-directed DNA polymerase</keyword>
<keyword id="KW-0255">Endonuclease</keyword>
<keyword id="KW-0945">Host-virus interaction</keyword>
<keyword id="KW-0378">Hydrolase</keyword>
<keyword id="KW-1090">Inhibition of host innate immune response by virus</keyword>
<keyword id="KW-1113">Inhibition of host RLR pathway by virus</keyword>
<keyword id="KW-0460">Magnesium</keyword>
<keyword id="KW-0479">Metal-binding</keyword>
<keyword id="KW-0511">Multifunctional enzyme</keyword>
<keyword id="KW-0540">Nuclease</keyword>
<keyword id="KW-0548">Nucleotidyltransferase</keyword>
<keyword id="KW-0695">RNA-directed DNA polymerase</keyword>
<keyword id="KW-0808">Transferase</keyword>
<keyword id="KW-0899">Viral immunoevasion</keyword>
<accession>Q99HR5</accession>
<reference key="1">
    <citation type="submission" date="2000-01" db="EMBL/GenBank/DDBJ databases">
        <title>Phylogenetic analysis of Hepatitis B virus strains with precore C-1858 variant.</title>
        <authorList>
            <person name="Alestig E."/>
            <person name="Hannoun C."/>
            <person name="Horal P."/>
            <person name="Lindh M."/>
        </authorList>
    </citation>
    <scope>NUCLEOTIDE SEQUENCE [GENOMIC DNA]</scope>
</reference>
<reference key="2">
    <citation type="journal article" date="2007" name="World J. Gastroenterol.">
        <title>Hepatitis B virus replication.</title>
        <authorList>
            <person name="Beck J."/>
            <person name="Nassal M."/>
        </authorList>
    </citation>
    <scope>REVIEW</scope>
</reference>
<organismHost>
    <name type="scientific">Homo sapiens</name>
    <name type="common">Human</name>
    <dbReference type="NCBI Taxonomy" id="9606"/>
</organismHost>
<organismHost>
    <name type="scientific">Pan troglodytes</name>
    <name type="common">Chimpanzee</name>
    <dbReference type="NCBI Taxonomy" id="9598"/>
</organismHost>
<sequence length="843" mass="94344">MPLSYPHFRKLLLLDDEAGPLEEELPRLADEGLNRRVAEDLNLQLPNVSIPWTHKVGNFTGLYSSTVPAFNPHWLTPSFPDIHLHQDLISKCEQFVGPLTKNELRRLKLIMPARFFPKLTKYFPLEKGIKPYYPEHAVNHYFKTRHYLHTLWKAGILYKRESTRSASFCGSPYSWEQELQHGSTSLNDKKGHGTESLCAQSTGILSRTSAGSSFQSKFQQSRLGLQQKQGHLANGKQGRSGRLRSRVHTPTRWPVGVEPSGTRCSNNLASRSASCFHQSAVREEANPSLSTSKRHTSTGNAVELNPVPPGLVGSEGKGSVFSCWWLQFRDAEPCSDYCLSHIINLLEDWGPCYEHGQHHIRTPRTPARVTGGVFLVDKNPHNTTESRLVVDFSQFSRGTTRVSWPKFAVPNLQSLTNLLSSNLSWLSLDVSAAFYHLPLHPAAMPHLLVGSSGLSRYVARLSSNSRIYDHQHGTMQNLHNSCSRNLYVSLLLLFQTLGRKLHLYSHPIILGFRKIPMGVGLSPFLLAQFTSAICSVVRRAFPHCLAFSYMDDLVLGAKSVQHLESLYTAVTNFLLSVGIHLNTSKTKRWGYNLHFMGYVIGSWGALPQDHIVHKIKECFRKLPVNRPIDWKVCQRIVGLLGFAAPFTQCGYPALMPLYTCITAKQAFVFSPTYKAFLCKQYMNLYPVARQRPGLCQVFADATPTGWGLAIGHQRMRGTFVAPLPIHTAELLAACFARSRSGANIIGTDNSVVLSRKYTSFPWLLGCAANWILRGTSFVYVPSALNPADDPSRGRLGLYRPLLRLPFQPTTGRTSLYADSPSVPSHLPVRVHFASPLHVAWRPP</sequence>
<organism>
    <name type="scientific">Hepatitis B virus genotype F2 (isolate Argentina/sa16/2000)</name>
    <name type="common">HBV-F</name>
    <dbReference type="NCBI Taxonomy" id="489501"/>
    <lineage>
        <taxon>Viruses</taxon>
        <taxon>Riboviria</taxon>
        <taxon>Pararnavirae</taxon>
        <taxon>Artverviricota</taxon>
        <taxon>Revtraviricetes</taxon>
        <taxon>Blubervirales</taxon>
        <taxon>Hepadnaviridae</taxon>
        <taxon>Orthohepadnavirus</taxon>
        <taxon>Hepatitis B virus</taxon>
        <taxon>hepatitis B virus genotype F</taxon>
    </lineage>
</organism>
<evidence type="ECO:0000255" key="1">
    <source>
        <dbReference type="HAMAP-Rule" id="MF_04073"/>
    </source>
</evidence>
<evidence type="ECO:0000256" key="2">
    <source>
        <dbReference type="SAM" id="MobiDB-lite"/>
    </source>
</evidence>
<name>DPOL_HBVF4</name>
<dbReference type="EC" id="2.7.7.7" evidence="1"/>
<dbReference type="EC" id="2.7.7.49" evidence="1"/>
<dbReference type="EC" id="3.1.26.4" evidence="1"/>
<dbReference type="EMBL" id="AF223965">
    <property type="protein sequence ID" value="AAG49733.1"/>
    <property type="molecule type" value="Genomic_DNA"/>
</dbReference>
<dbReference type="Proteomes" id="UP000008031">
    <property type="component" value="Segment"/>
</dbReference>
<dbReference type="GO" id="GO:0003677">
    <property type="term" value="F:DNA binding"/>
    <property type="evidence" value="ECO:0007669"/>
    <property type="project" value="UniProtKB-UniRule"/>
</dbReference>
<dbReference type="GO" id="GO:0003887">
    <property type="term" value="F:DNA-directed DNA polymerase activity"/>
    <property type="evidence" value="ECO:0007669"/>
    <property type="project" value="UniProtKB-UniRule"/>
</dbReference>
<dbReference type="GO" id="GO:0046872">
    <property type="term" value="F:metal ion binding"/>
    <property type="evidence" value="ECO:0007669"/>
    <property type="project" value="UniProtKB-UniRule"/>
</dbReference>
<dbReference type="GO" id="GO:0003964">
    <property type="term" value="F:RNA-directed DNA polymerase activity"/>
    <property type="evidence" value="ECO:0007669"/>
    <property type="project" value="UniProtKB-UniRule"/>
</dbReference>
<dbReference type="GO" id="GO:0004523">
    <property type="term" value="F:RNA-DNA hybrid ribonuclease activity"/>
    <property type="evidence" value="ECO:0007669"/>
    <property type="project" value="UniProtKB-UniRule"/>
</dbReference>
<dbReference type="GO" id="GO:0006260">
    <property type="term" value="P:DNA replication"/>
    <property type="evidence" value="ECO:0007669"/>
    <property type="project" value="UniProtKB-UniRule"/>
</dbReference>
<dbReference type="GO" id="GO:0052170">
    <property type="term" value="P:symbiont-mediated suppression of host innate immune response"/>
    <property type="evidence" value="ECO:0007669"/>
    <property type="project" value="UniProtKB-UniRule"/>
</dbReference>
<dbReference type="FunFam" id="3.30.70.270:FF:000009">
    <property type="entry name" value="Protein P"/>
    <property type="match status" value="1"/>
</dbReference>
<dbReference type="Gene3D" id="3.30.70.270">
    <property type="match status" value="1"/>
</dbReference>
<dbReference type="HAMAP" id="MF_04073">
    <property type="entry name" value="HBV_DPOL"/>
    <property type="match status" value="1"/>
</dbReference>
<dbReference type="InterPro" id="IPR043502">
    <property type="entry name" value="DNA/RNA_pol_sf"/>
</dbReference>
<dbReference type="InterPro" id="IPR001462">
    <property type="entry name" value="DNApol_viral_C"/>
</dbReference>
<dbReference type="InterPro" id="IPR000201">
    <property type="entry name" value="DNApol_viral_N"/>
</dbReference>
<dbReference type="InterPro" id="IPR037531">
    <property type="entry name" value="HBV_DPOL"/>
</dbReference>
<dbReference type="InterPro" id="IPR043128">
    <property type="entry name" value="Rev_trsase/Diguanyl_cyclase"/>
</dbReference>
<dbReference type="InterPro" id="IPR000477">
    <property type="entry name" value="RT_dom"/>
</dbReference>
<dbReference type="InterPro" id="IPR051320">
    <property type="entry name" value="Viral_Replic_Matur_Polypro"/>
</dbReference>
<dbReference type="PANTHER" id="PTHR33064:SF29">
    <property type="entry name" value="PEPTIDASE A2 DOMAIN-CONTAINING PROTEIN-RELATED"/>
    <property type="match status" value="1"/>
</dbReference>
<dbReference type="PANTHER" id="PTHR33064">
    <property type="entry name" value="POL PROTEIN"/>
    <property type="match status" value="1"/>
</dbReference>
<dbReference type="Pfam" id="PF00336">
    <property type="entry name" value="DNA_pol_viral_C"/>
    <property type="match status" value="1"/>
</dbReference>
<dbReference type="Pfam" id="PF00242">
    <property type="entry name" value="DNA_pol_viral_N"/>
    <property type="match status" value="1"/>
</dbReference>
<dbReference type="Pfam" id="PF00078">
    <property type="entry name" value="RVT_1"/>
    <property type="match status" value="1"/>
</dbReference>
<dbReference type="SUPFAM" id="SSF56672">
    <property type="entry name" value="DNA/RNA polymerases"/>
    <property type="match status" value="1"/>
</dbReference>
<dbReference type="PROSITE" id="PS50878">
    <property type="entry name" value="RT_POL"/>
    <property type="match status" value="1"/>
</dbReference>
<proteinExistence type="inferred from homology"/>
<gene>
    <name evidence="1" type="primary">P</name>
</gene>
<feature type="chain" id="PRO_0000323276" description="Protein P">
    <location>
        <begin position="1"/>
        <end position="843"/>
    </location>
</feature>
<feature type="domain" description="Reverse transcriptase" evidence="1">
    <location>
        <begin position="357"/>
        <end position="600"/>
    </location>
</feature>
<feature type="region of interest" description="Terminal protein domain (TP)" evidence="1">
    <location>
        <begin position="1"/>
        <end position="177"/>
    </location>
</feature>
<feature type="region of interest" description="Spacer" evidence="1">
    <location>
        <begin position="178"/>
        <end position="346"/>
    </location>
</feature>
<feature type="region of interest" description="Disordered" evidence="2">
    <location>
        <begin position="284"/>
        <end position="308"/>
    </location>
</feature>
<feature type="region of interest" description="Polymerase/reverse transcriptase domain (RT)" evidence="1">
    <location>
        <begin position="347"/>
        <end position="690"/>
    </location>
</feature>
<feature type="binding site" evidence="1">
    <location>
        <position position="429"/>
    </location>
    <ligand>
        <name>Mg(2+)</name>
        <dbReference type="ChEBI" id="CHEBI:18420"/>
        <note>catalytic</note>
    </ligand>
</feature>
<feature type="binding site" evidence="1">
    <location>
        <position position="551"/>
    </location>
    <ligand>
        <name>Mg(2+)</name>
        <dbReference type="ChEBI" id="CHEBI:18420"/>
        <note>catalytic</note>
    </ligand>
</feature>
<feature type="binding site" evidence="1">
    <location>
        <position position="552"/>
    </location>
    <ligand>
        <name>Mg(2+)</name>
        <dbReference type="ChEBI" id="CHEBI:18420"/>
        <note>catalytic</note>
    </ligand>
</feature>
<feature type="site" description="Priming of reverse-transcription by covalently linking the first nucleotide of the (-)DNA" evidence="1">
    <location>
        <position position="63"/>
    </location>
</feature>
<comment type="function">
    <text evidence="1">Multifunctional enzyme that converts the viral RNA genome into dsDNA in viral cytoplasmic capsids. This enzyme displays a DNA polymerase activity that can copy either DNA or RNA templates, and a ribonuclease H (RNase H) activity that cleaves the RNA strand of RNA-DNA heteroduplexes in a partially processive 3'- to 5'-endonucleasic mode. Neo-synthesized pregenomic RNA (pgRNA) are encapsidated together with the P protein, and reverse-transcribed inside the nucleocapsid. Initiation of reverse-transcription occurs first by binding the epsilon loop on the pgRNA genome, and is initiated by protein priming, thereby the 5'-end of (-)DNA is covalently linked to P protein. Partial (+)DNA is synthesized from the (-)DNA template and generates the relaxed circular DNA (RC-DNA) genome. After budding and infection, the RC-DNA migrates in the nucleus, and is converted into a plasmid-like covalently closed circular DNA (cccDNA). The activity of P protein does not seem to be necessary for cccDNA generation, and is presumably released from (+)DNA by host nuclear DNA repair machinery.</text>
</comment>
<comment type="catalytic activity">
    <reaction evidence="1">
        <text>DNA(n) + a 2'-deoxyribonucleoside 5'-triphosphate = DNA(n+1) + diphosphate</text>
        <dbReference type="Rhea" id="RHEA:22508"/>
        <dbReference type="Rhea" id="RHEA-COMP:17339"/>
        <dbReference type="Rhea" id="RHEA-COMP:17340"/>
        <dbReference type="ChEBI" id="CHEBI:33019"/>
        <dbReference type="ChEBI" id="CHEBI:61560"/>
        <dbReference type="ChEBI" id="CHEBI:173112"/>
        <dbReference type="EC" id="2.7.7.7"/>
    </reaction>
</comment>
<comment type="catalytic activity">
    <reaction evidence="1">
        <text>DNA(n) + a 2'-deoxyribonucleoside 5'-triphosphate = DNA(n+1) + diphosphate</text>
        <dbReference type="Rhea" id="RHEA:22508"/>
        <dbReference type="Rhea" id="RHEA-COMP:17339"/>
        <dbReference type="Rhea" id="RHEA-COMP:17340"/>
        <dbReference type="ChEBI" id="CHEBI:33019"/>
        <dbReference type="ChEBI" id="CHEBI:61560"/>
        <dbReference type="ChEBI" id="CHEBI:173112"/>
        <dbReference type="EC" id="2.7.7.49"/>
    </reaction>
</comment>
<comment type="catalytic activity">
    <reaction evidence="1">
        <text>Endonucleolytic cleavage to 5'-phosphomonoester.</text>
        <dbReference type="EC" id="3.1.26.4"/>
    </reaction>
</comment>
<comment type="activity regulation">
    <text evidence="1">Activated by host HSP70 and HSP40 in vitro to be able to bind the epsilon loop of the pgRNA. Because deletion of the RNase H region renders the protein partly chaperone-independent, the chaperones may be needed indirectly to relieve occlusion of the RNA-binding site by this domain. Inhibited by several reverse-transcriptase inhibitors: Lamivudine, Adefovir and Entecavir.</text>
</comment>
<comment type="domain">
    <text evidence="1">Terminal protein domain (TP) is hepadnavirus-specific. Spacer domain is highly variable and separates the TP and RT domains. Polymerase/reverse-transcriptase domain (RT) and ribonuclease H domain (RH) are similar to retrovirus reverse transcriptase/RNase H.</text>
</comment>
<comment type="domain">
    <text evidence="1">The polymerase/reverse transcriptase (RT) and ribonuclease H (RH) domains are structured in five subdomains: finger, palm, thumb, connection and RNase H. Within the palm subdomain, the 'primer grip' region is thought to be involved in the positioning of the primer terminus for accommodating the incoming nucleotide. The RH domain stabilizes the association of RT with primer-template.</text>
</comment>
<comment type="miscellaneous">
    <text evidence="1">Hepadnaviral virions contain probably just one P protein molecule per particle.</text>
</comment>
<comment type="similarity">
    <text evidence="1">Belongs to the hepadnaviridae P protein family.</text>
</comment>
<protein>
    <recommendedName>
        <fullName evidence="1">Protein P</fullName>
    </recommendedName>
    <domain>
        <recommendedName>
            <fullName evidence="1">DNA-directed DNA polymerase</fullName>
            <ecNumber evidence="1">2.7.7.7</ecNumber>
        </recommendedName>
    </domain>
    <domain>
        <recommendedName>
            <fullName evidence="1">RNA-directed DNA polymerase</fullName>
            <ecNumber evidence="1">2.7.7.49</ecNumber>
        </recommendedName>
    </domain>
    <domain>
        <recommendedName>
            <fullName evidence="1">Ribonuclease H</fullName>
            <ecNumber evidence="1">3.1.26.4</ecNumber>
        </recommendedName>
    </domain>
</protein>